<accession>Q51853</accession>
<accession>Q51852</accession>
<keyword id="KW-0049">Antioxidant</keyword>
<keyword id="KW-0186">Copper</keyword>
<keyword id="KW-0479">Metal-binding</keyword>
<keyword id="KW-0560">Oxidoreductase</keyword>
<keyword id="KW-0574">Periplasm</keyword>
<keyword id="KW-0862">Zinc</keyword>
<dbReference type="EC" id="1.15.1.1"/>
<dbReference type="EMBL" id="U59226">
    <property type="protein sequence ID" value="AAB38772.1"/>
    <property type="molecule type" value="Genomic_DNA"/>
</dbReference>
<dbReference type="EMBL" id="U59225">
    <property type="protein sequence ID" value="AAB38771.1"/>
    <property type="molecule type" value="Genomic_DNA"/>
</dbReference>
<dbReference type="SMR" id="Q51853"/>
<dbReference type="GO" id="GO:0042597">
    <property type="term" value="C:periplasmic space"/>
    <property type="evidence" value="ECO:0007669"/>
    <property type="project" value="UniProtKB-SubCell"/>
</dbReference>
<dbReference type="GO" id="GO:0046872">
    <property type="term" value="F:metal ion binding"/>
    <property type="evidence" value="ECO:0007669"/>
    <property type="project" value="UniProtKB-KW"/>
</dbReference>
<dbReference type="GO" id="GO:0004784">
    <property type="term" value="F:superoxide dismutase activity"/>
    <property type="evidence" value="ECO:0007669"/>
    <property type="project" value="UniProtKB-EC"/>
</dbReference>
<dbReference type="Gene3D" id="2.60.40.200">
    <property type="entry name" value="Superoxide dismutase, copper/zinc binding domain"/>
    <property type="match status" value="1"/>
</dbReference>
<dbReference type="InterPro" id="IPR036423">
    <property type="entry name" value="SOD-like_Cu/Zn_dom_sf"/>
</dbReference>
<dbReference type="InterPro" id="IPR001424">
    <property type="entry name" value="SOD_Cu_Zn_dom"/>
</dbReference>
<dbReference type="Pfam" id="PF00080">
    <property type="entry name" value="Sod_Cu"/>
    <property type="match status" value="1"/>
</dbReference>
<dbReference type="SUPFAM" id="SSF49329">
    <property type="entry name" value="Cu,Zn superoxide dismutase-like"/>
    <property type="match status" value="1"/>
</dbReference>
<gene>
    <name type="primary">sodC</name>
</gene>
<evidence type="ECO:0000250" key="1"/>
<evidence type="ECO:0000256" key="2">
    <source>
        <dbReference type="SAM" id="MobiDB-lite"/>
    </source>
</evidence>
<evidence type="ECO:0000305" key="3"/>
<comment type="function">
    <text evidence="1">Destroys radicals which are normally produced within the cells and which are toxic to biological systems.</text>
</comment>
<comment type="catalytic activity">
    <reaction>
        <text>2 superoxide + 2 H(+) = H2O2 + O2</text>
        <dbReference type="Rhea" id="RHEA:20696"/>
        <dbReference type="ChEBI" id="CHEBI:15378"/>
        <dbReference type="ChEBI" id="CHEBI:15379"/>
        <dbReference type="ChEBI" id="CHEBI:16240"/>
        <dbReference type="ChEBI" id="CHEBI:18421"/>
        <dbReference type="EC" id="1.15.1.1"/>
    </reaction>
</comment>
<comment type="cofactor">
    <cofactor evidence="1">
        <name>Cu cation</name>
        <dbReference type="ChEBI" id="CHEBI:23378"/>
    </cofactor>
    <text evidence="1">Binds 1 copper ion per subunit.</text>
</comment>
<comment type="cofactor">
    <cofactor evidence="1">
        <name>Zn(2+)</name>
        <dbReference type="ChEBI" id="CHEBI:29105"/>
    </cofactor>
    <text evidence="1">Binds 1 zinc ion per subunit.</text>
</comment>
<comment type="subunit">
    <text evidence="1">Homodimer.</text>
</comment>
<comment type="subcellular location">
    <subcellularLocation>
        <location evidence="1">Periplasm</location>
    </subcellularLocation>
</comment>
<comment type="similarity">
    <text evidence="3">Belongs to the Cu-Zn superoxide dismutase family.</text>
</comment>
<name>SODC_MANHA</name>
<sequence length="86" mass="9091">AKEKGGKLTAGLAAGGHWNPNKAPHHGFPWSDDAHLGDLPALTVLHDGTSTNPVLAPRLKKLDEIKGRSLMIHEGGDNHSDHPAPL</sequence>
<reference key="1">
    <citation type="journal article" date="1996" name="FEMS Microbiol. Lett.">
        <title>Occurrence of [copper, zinc]-cofactored superoxide dismutase in Pasteurella haemolytica and its serotype distribution.</title>
        <authorList>
            <person name="Lainson F.A."/>
            <person name="Thomson N."/>
            <person name="Rowe H.A."/>
            <person name="Langford P.R."/>
            <person name="Aitchison K.D."/>
            <person name="Donachie W."/>
            <person name="Kroll J.S."/>
        </authorList>
    </citation>
    <scope>NUCLEOTIDE SEQUENCE [GENOMIC DNA]</scope>
    <source>
        <strain>Serotype A2</strain>
        <strain>Serotype A7</strain>
    </source>
</reference>
<proteinExistence type="inferred from homology"/>
<protein>
    <recommendedName>
        <fullName>Superoxide dismutase [Cu-Zn]</fullName>
        <ecNumber>1.15.1.1</ecNumber>
    </recommendedName>
</protein>
<feature type="chain" id="PRO_0000164161" description="Superoxide dismutase [Cu-Zn]">
    <location>
        <begin position="1" status="less than"/>
        <end position="86" status="greater than"/>
    </location>
</feature>
<feature type="region of interest" description="Disordered" evidence="2">
    <location>
        <begin position="1"/>
        <end position="26"/>
    </location>
</feature>
<feature type="compositionally biased region" description="Low complexity" evidence="2">
    <location>
        <begin position="7"/>
        <end position="16"/>
    </location>
</feature>
<feature type="binding site" evidence="1">
    <location>
        <position position="17"/>
    </location>
    <ligand>
        <name>Cu cation</name>
        <dbReference type="ChEBI" id="CHEBI:23378"/>
        <note>catalytic</note>
    </ligand>
</feature>
<feature type="binding site" evidence="1">
    <location>
        <position position="17"/>
    </location>
    <ligand>
        <name>Zn(2+)</name>
        <dbReference type="ChEBI" id="CHEBI:29105"/>
        <note>structural</note>
    </ligand>
</feature>
<feature type="binding site" evidence="1">
    <location>
        <position position="26"/>
    </location>
    <ligand>
        <name>Zn(2+)</name>
        <dbReference type="ChEBI" id="CHEBI:29105"/>
        <note>structural</note>
    </ligand>
</feature>
<feature type="binding site" evidence="1">
    <location>
        <position position="35"/>
    </location>
    <ligand>
        <name>Zn(2+)</name>
        <dbReference type="ChEBI" id="CHEBI:29105"/>
        <note>structural</note>
    </ligand>
</feature>
<feature type="binding site" evidence="1">
    <location>
        <position position="38"/>
    </location>
    <ligand>
        <name>Zn(2+)</name>
        <dbReference type="ChEBI" id="CHEBI:29105"/>
        <note>structural</note>
    </ligand>
</feature>
<feature type="binding site" evidence="1">
    <location>
        <position position="73"/>
    </location>
    <ligand>
        <name>Cu cation</name>
        <dbReference type="ChEBI" id="CHEBI:23378"/>
        <note>catalytic</note>
    </ligand>
</feature>
<feature type="non-terminal residue">
    <location>
        <position position="1"/>
    </location>
</feature>
<feature type="non-terminal residue">
    <location>
        <position position="86"/>
    </location>
</feature>
<organism>
    <name type="scientific">Mannheimia haemolytica</name>
    <name type="common">Pasteurella haemolytica</name>
    <dbReference type="NCBI Taxonomy" id="75985"/>
    <lineage>
        <taxon>Bacteria</taxon>
        <taxon>Pseudomonadati</taxon>
        <taxon>Pseudomonadota</taxon>
        <taxon>Gammaproteobacteria</taxon>
        <taxon>Pasteurellales</taxon>
        <taxon>Pasteurellaceae</taxon>
        <taxon>Mannheimia</taxon>
    </lineage>
</organism>